<evidence type="ECO:0000255" key="1">
    <source>
        <dbReference type="HAMAP-Rule" id="MF_00031"/>
    </source>
</evidence>
<proteinExistence type="inferred from homology"/>
<feature type="chain" id="PRO_1000002412" description="Holliday junction branch migration complex subunit RuvA">
    <location>
        <begin position="1"/>
        <end position="193"/>
    </location>
</feature>
<feature type="region of interest" description="Domain I" evidence="1">
    <location>
        <begin position="1"/>
        <end position="64"/>
    </location>
</feature>
<feature type="region of interest" description="Domain II" evidence="1">
    <location>
        <begin position="65"/>
        <end position="139"/>
    </location>
</feature>
<feature type="region of interest" description="Flexible linker" evidence="1">
    <location>
        <begin position="139"/>
        <end position="143"/>
    </location>
</feature>
<feature type="region of interest" description="Domain III" evidence="1">
    <location>
        <begin position="144"/>
        <end position="193"/>
    </location>
</feature>
<accession>A2S595</accession>
<name>RUVA_BURM9</name>
<keyword id="KW-0963">Cytoplasm</keyword>
<keyword id="KW-0227">DNA damage</keyword>
<keyword id="KW-0233">DNA recombination</keyword>
<keyword id="KW-0234">DNA repair</keyword>
<keyword id="KW-0238">DNA-binding</keyword>
<protein>
    <recommendedName>
        <fullName evidence="1">Holliday junction branch migration complex subunit RuvA</fullName>
    </recommendedName>
</protein>
<reference key="1">
    <citation type="journal article" date="2010" name="Genome Biol. Evol.">
        <title>Continuing evolution of Burkholderia mallei through genome reduction and large-scale rearrangements.</title>
        <authorList>
            <person name="Losada L."/>
            <person name="Ronning C.M."/>
            <person name="DeShazer D."/>
            <person name="Woods D."/>
            <person name="Fedorova N."/>
            <person name="Kim H.S."/>
            <person name="Shabalina S.A."/>
            <person name="Pearson T.R."/>
            <person name="Brinkac L."/>
            <person name="Tan P."/>
            <person name="Nandi T."/>
            <person name="Crabtree J."/>
            <person name="Badger J."/>
            <person name="Beckstrom-Sternberg S."/>
            <person name="Saqib M."/>
            <person name="Schutzer S.E."/>
            <person name="Keim P."/>
            <person name="Nierman W.C."/>
        </authorList>
    </citation>
    <scope>NUCLEOTIDE SEQUENCE [LARGE SCALE GENOMIC DNA]</scope>
    <source>
        <strain>NCTC 10229</strain>
    </source>
</reference>
<sequence>MIGRIAGTLLEKNPPHILVDCNGVGYEVDVPMSTFYNLPHTGEKVVLLTQLIVREDAHLLYGFLTPPERSTFRELLKITGVGARMALAVLSGMSVAELSQAVTLQDAARLTRVPGIGKKTAERLLLELKGKLGADLGPLAGAASPSDHATDILNALVALGYSEKEALAAIKNVPAGTGVSEGIKLSLKALSKA</sequence>
<comment type="function">
    <text evidence="1">The RuvA-RuvB-RuvC complex processes Holliday junction (HJ) DNA during genetic recombination and DNA repair, while the RuvA-RuvB complex plays an important role in the rescue of blocked DNA replication forks via replication fork reversal (RFR). RuvA specifically binds to HJ cruciform DNA, conferring on it an open structure. The RuvB hexamer acts as an ATP-dependent pump, pulling dsDNA into and through the RuvAB complex. HJ branch migration allows RuvC to scan DNA until it finds its consensus sequence, where it cleaves and resolves the cruciform DNA.</text>
</comment>
<comment type="subunit">
    <text evidence="1">Homotetramer. Forms an RuvA(8)-RuvB(12)-Holliday junction (HJ) complex. HJ DNA is sandwiched between 2 RuvA tetramers; dsDNA enters through RuvA and exits via RuvB. An RuvB hexamer assembles on each DNA strand where it exits the tetramer. Each RuvB hexamer is contacted by two RuvA subunits (via domain III) on 2 adjacent RuvB subunits; this complex drives branch migration. In the full resolvosome a probable DNA-RuvA(4)-RuvB(12)-RuvC(2) complex forms which resolves the HJ.</text>
</comment>
<comment type="subcellular location">
    <subcellularLocation>
        <location evidence="1">Cytoplasm</location>
    </subcellularLocation>
</comment>
<comment type="domain">
    <text evidence="1">Has three domains with a flexible linker between the domains II and III and assumes an 'L' shape. Domain III is highly mobile and contacts RuvB.</text>
</comment>
<comment type="similarity">
    <text evidence="1">Belongs to the RuvA family.</text>
</comment>
<organism>
    <name type="scientific">Burkholderia mallei (strain NCTC 10229)</name>
    <dbReference type="NCBI Taxonomy" id="412022"/>
    <lineage>
        <taxon>Bacteria</taxon>
        <taxon>Pseudomonadati</taxon>
        <taxon>Pseudomonadota</taxon>
        <taxon>Betaproteobacteria</taxon>
        <taxon>Burkholderiales</taxon>
        <taxon>Burkholderiaceae</taxon>
        <taxon>Burkholderia</taxon>
        <taxon>pseudomallei group</taxon>
    </lineage>
</organism>
<dbReference type="EMBL" id="CP000546">
    <property type="protein sequence ID" value="ABN02206.1"/>
    <property type="molecule type" value="Genomic_DNA"/>
</dbReference>
<dbReference type="RefSeq" id="WP_004194029.1">
    <property type="nucleotide sequence ID" value="NC_008836.1"/>
</dbReference>
<dbReference type="SMR" id="A2S595"/>
<dbReference type="GeneID" id="93061493"/>
<dbReference type="KEGG" id="bml:BMA10229_A1129"/>
<dbReference type="HOGENOM" id="CLU_087936_0_0_4"/>
<dbReference type="Proteomes" id="UP000002283">
    <property type="component" value="Chromosome I"/>
</dbReference>
<dbReference type="GO" id="GO:0005737">
    <property type="term" value="C:cytoplasm"/>
    <property type="evidence" value="ECO:0007669"/>
    <property type="project" value="UniProtKB-SubCell"/>
</dbReference>
<dbReference type="GO" id="GO:0009379">
    <property type="term" value="C:Holliday junction helicase complex"/>
    <property type="evidence" value="ECO:0007669"/>
    <property type="project" value="InterPro"/>
</dbReference>
<dbReference type="GO" id="GO:0048476">
    <property type="term" value="C:Holliday junction resolvase complex"/>
    <property type="evidence" value="ECO:0007669"/>
    <property type="project" value="UniProtKB-UniRule"/>
</dbReference>
<dbReference type="GO" id="GO:0005524">
    <property type="term" value="F:ATP binding"/>
    <property type="evidence" value="ECO:0007669"/>
    <property type="project" value="InterPro"/>
</dbReference>
<dbReference type="GO" id="GO:0000400">
    <property type="term" value="F:four-way junction DNA binding"/>
    <property type="evidence" value="ECO:0007669"/>
    <property type="project" value="UniProtKB-UniRule"/>
</dbReference>
<dbReference type="GO" id="GO:0009378">
    <property type="term" value="F:four-way junction helicase activity"/>
    <property type="evidence" value="ECO:0007669"/>
    <property type="project" value="InterPro"/>
</dbReference>
<dbReference type="GO" id="GO:0006310">
    <property type="term" value="P:DNA recombination"/>
    <property type="evidence" value="ECO:0007669"/>
    <property type="project" value="UniProtKB-UniRule"/>
</dbReference>
<dbReference type="GO" id="GO:0006281">
    <property type="term" value="P:DNA repair"/>
    <property type="evidence" value="ECO:0007669"/>
    <property type="project" value="UniProtKB-UniRule"/>
</dbReference>
<dbReference type="CDD" id="cd14332">
    <property type="entry name" value="UBA_RuvA_C"/>
    <property type="match status" value="1"/>
</dbReference>
<dbReference type="Gene3D" id="1.10.150.20">
    <property type="entry name" value="5' to 3' exonuclease, C-terminal subdomain"/>
    <property type="match status" value="1"/>
</dbReference>
<dbReference type="Gene3D" id="1.10.8.10">
    <property type="entry name" value="DNA helicase RuvA subunit, C-terminal domain"/>
    <property type="match status" value="1"/>
</dbReference>
<dbReference type="Gene3D" id="2.40.50.140">
    <property type="entry name" value="Nucleic acid-binding proteins"/>
    <property type="match status" value="1"/>
</dbReference>
<dbReference type="HAMAP" id="MF_00031">
    <property type="entry name" value="DNA_HJ_migration_RuvA"/>
    <property type="match status" value="1"/>
</dbReference>
<dbReference type="InterPro" id="IPR013849">
    <property type="entry name" value="DNA_helicase_Holl-junc_RuvA_I"/>
</dbReference>
<dbReference type="InterPro" id="IPR003583">
    <property type="entry name" value="Hlx-hairpin-Hlx_DNA-bd_motif"/>
</dbReference>
<dbReference type="InterPro" id="IPR012340">
    <property type="entry name" value="NA-bd_OB-fold"/>
</dbReference>
<dbReference type="InterPro" id="IPR000085">
    <property type="entry name" value="RuvA"/>
</dbReference>
<dbReference type="InterPro" id="IPR010994">
    <property type="entry name" value="RuvA_2-like"/>
</dbReference>
<dbReference type="InterPro" id="IPR011114">
    <property type="entry name" value="RuvA_C"/>
</dbReference>
<dbReference type="InterPro" id="IPR036267">
    <property type="entry name" value="RuvA_C_sf"/>
</dbReference>
<dbReference type="NCBIfam" id="TIGR00084">
    <property type="entry name" value="ruvA"/>
    <property type="match status" value="1"/>
</dbReference>
<dbReference type="Pfam" id="PF14520">
    <property type="entry name" value="HHH_5"/>
    <property type="match status" value="1"/>
</dbReference>
<dbReference type="Pfam" id="PF07499">
    <property type="entry name" value="RuvA_C"/>
    <property type="match status" value="1"/>
</dbReference>
<dbReference type="Pfam" id="PF01330">
    <property type="entry name" value="RuvA_N"/>
    <property type="match status" value="1"/>
</dbReference>
<dbReference type="SMART" id="SM00278">
    <property type="entry name" value="HhH1"/>
    <property type="match status" value="2"/>
</dbReference>
<dbReference type="SUPFAM" id="SSF46929">
    <property type="entry name" value="DNA helicase RuvA subunit, C-terminal domain"/>
    <property type="match status" value="1"/>
</dbReference>
<dbReference type="SUPFAM" id="SSF50249">
    <property type="entry name" value="Nucleic acid-binding proteins"/>
    <property type="match status" value="1"/>
</dbReference>
<dbReference type="SUPFAM" id="SSF47781">
    <property type="entry name" value="RuvA domain 2-like"/>
    <property type="match status" value="1"/>
</dbReference>
<gene>
    <name evidence="1" type="primary">ruvA</name>
    <name type="ordered locus">BMA10229_A1129</name>
</gene>